<evidence type="ECO:0000250" key="1"/>
<evidence type="ECO:0000250" key="2">
    <source>
        <dbReference type="UniProtKB" id="O55070"/>
    </source>
</evidence>
<evidence type="ECO:0000250" key="3">
    <source>
        <dbReference type="UniProtKB" id="O89107"/>
    </source>
</evidence>
<evidence type="ECO:0000250" key="4">
    <source>
        <dbReference type="UniProtKB" id="P00639"/>
    </source>
</evidence>
<evidence type="ECO:0000255" key="5"/>
<evidence type="ECO:0000269" key="6">
    <source>
    </source>
</evidence>
<evidence type="ECO:0000269" key="7">
    <source>
    </source>
</evidence>
<evidence type="ECO:0000269" key="8">
    <source>
    </source>
</evidence>
<evidence type="ECO:0000269" key="9">
    <source>
    </source>
</evidence>
<evidence type="ECO:0000269" key="10">
    <source>
    </source>
</evidence>
<evidence type="ECO:0000269" key="11">
    <source>
    </source>
</evidence>
<evidence type="ECO:0000269" key="12">
    <source>
    </source>
</evidence>
<evidence type="ECO:0000269" key="13">
    <source>
    </source>
</evidence>
<evidence type="ECO:0000269" key="14">
    <source>
    </source>
</evidence>
<evidence type="ECO:0000269" key="15">
    <source>
    </source>
</evidence>
<evidence type="ECO:0000269" key="16">
    <source>
    </source>
</evidence>
<evidence type="ECO:0000269" key="17">
    <source>
    </source>
</evidence>
<evidence type="ECO:0000303" key="18">
    <source>
    </source>
</evidence>
<evidence type="ECO:0000305" key="19"/>
<evidence type="ECO:0000305" key="20">
    <source>
    </source>
</evidence>
<evidence type="ECO:0000312" key="21">
    <source>
        <dbReference type="HGNC" id="HGNC:2959"/>
    </source>
</evidence>
<evidence type="ECO:0007829" key="22">
    <source>
        <dbReference type="PDB" id="7KIU"/>
    </source>
</evidence>
<gene>
    <name evidence="21" type="primary">DNASE1L3</name>
    <name type="synonym">DHP2</name>
    <name type="synonym">DNAS1L3</name>
</gene>
<sequence>MSRELAPLLLLLLSIHSALAMRICSFNVRSFGESKQEDKNAMDVIVKVIKRCDIILVMEIKDSNNRICPILMEKLNRNSRRGITYNYVISSRLGRNTYKEQYAFLYKEKLVSVKRSYHYHDYQDGDADVFSREPFVVWFQSPHTAVKDFVIIPLHTTPETSVKEIDELVEVYTDVKHRWKAENFIFMGDFNAGCSYVPKKAWKNIRLRTDPRFVWLIGDQEDTTVKKSTNCAYDRIVLRGQEIVSSVVPKSNSVFDFQKAYKLTEEEALDVSDHFPVEFKLQSSRAFTNSKKSVTLRKKTKSKRS</sequence>
<protein>
    <recommendedName>
        <fullName>Deoxyribonuclease gamma</fullName>
        <shortName>DNase gamma</shortName>
        <ecNumber>3.1.21.-</ecNumber>
    </recommendedName>
    <alternativeName>
        <fullName>DNase I homolog protein DHP2</fullName>
    </alternativeName>
    <alternativeName>
        <fullName>Deoxyribonuclease I-like 3</fullName>
        <shortName>DNase I-like 3</shortName>
    </alternativeName>
    <alternativeName>
        <fullName>Liver and spleen DNase</fullName>
        <shortName>LS-DNase</shortName>
        <shortName>LSD</shortName>
    </alternativeName>
</protein>
<keyword id="KW-0002">3D-structure</keyword>
<keyword id="KW-0013">ADP-ribosylation</keyword>
<keyword id="KW-0025">Alternative splicing</keyword>
<keyword id="KW-0053">Apoptosis</keyword>
<keyword id="KW-0106">Calcium</keyword>
<keyword id="KW-1015">Disulfide bond</keyword>
<keyword id="KW-0255">Endonuclease</keyword>
<keyword id="KW-0256">Endoplasmic reticulum</keyword>
<keyword id="KW-0378">Hydrolase</keyword>
<keyword id="KW-1210">Necrosis</keyword>
<keyword id="KW-0540">Nuclease</keyword>
<keyword id="KW-0539">Nucleus</keyword>
<keyword id="KW-1267">Proteomics identification</keyword>
<keyword id="KW-1185">Reference proteome</keyword>
<keyword id="KW-0964">Secreted</keyword>
<keyword id="KW-0732">Signal</keyword>
<keyword id="KW-0772">Systemic lupus erythematosus</keyword>
<name>DNSL3_HUMAN</name>
<reference key="1">
    <citation type="journal article" date="1997" name="Genomics">
        <title>Identification, localization, and expression of two novel human genes similar to deoxyribonuclease I.</title>
        <authorList>
            <person name="Rodriguez A.M."/>
            <person name="Rodin D."/>
            <person name="Nomura H."/>
            <person name="Morton C.C."/>
            <person name="Weremowicz S."/>
            <person name="Schneider M.C."/>
        </authorList>
    </citation>
    <scope>NUCLEOTIDE SEQUENCE [MRNA] (ISOFORM 1)</scope>
</reference>
<reference key="2">
    <citation type="journal article" date="1997" name="Biochem. Biophys. Res. Commun.">
        <title>Cloning and characterization of a novel human DNase.</title>
        <authorList>
            <person name="Zeng Z."/>
            <person name="Parmelee D."/>
            <person name="Hyaw H."/>
            <person name="Coleman T.A."/>
            <person name="Su K."/>
            <person name="Zhang J."/>
            <person name="Gentz R."/>
            <person name="Ruben S."/>
            <person name="Rosen C."/>
            <person name="Li Y."/>
        </authorList>
    </citation>
    <scope>NUCLEOTIDE SEQUENCE [MRNA] (ISOFORM 1)</scope>
    <scope>FUNCTION</scope>
</reference>
<reference key="3">
    <citation type="journal article" date="1998" name="Gene">
        <title>Cloning and characterization of an actin-resistant DNase I-like endonuclease secreted by macrophages.</title>
        <authorList>
            <person name="Baron W.F."/>
            <person name="Pan C.Q."/>
            <person name="Spencer S.A."/>
            <person name="Ryan A.M."/>
            <person name="Lazarus R.A."/>
            <person name="Baker K.P."/>
        </authorList>
    </citation>
    <scope>NUCLEOTIDE SEQUENCE [MRNA] (ISOFORM 1)</scope>
    <scope>FUNCTION</scope>
    <scope>SUBCELLULAR LOCATION</scope>
</reference>
<reference key="4">
    <citation type="journal article" date="1998" name="Apoptosis">
        <title>cDNA cloning of human DNase gamma: chromosomal localization of its gene and enzymatic properties of recombinant protein.</title>
        <authorList>
            <person name="Shiokawa D."/>
            <person name="Hirai M."/>
            <person name="Tanuma S."/>
        </authorList>
    </citation>
    <scope>NUCLEOTIDE SEQUENCE [MRNA] (ISOFORM 1)</scope>
    <scope>FUNCTION</scope>
    <scope>VARIANT LYS-96</scope>
    <source>
        <tissue>Spleen</tissue>
    </source>
</reference>
<reference key="5">
    <citation type="journal article" date="2004" name="Nat. Genet.">
        <title>Complete sequencing and characterization of 21,243 full-length human cDNAs.</title>
        <authorList>
            <person name="Ota T."/>
            <person name="Suzuki Y."/>
            <person name="Nishikawa T."/>
            <person name="Otsuki T."/>
            <person name="Sugiyama T."/>
            <person name="Irie R."/>
            <person name="Wakamatsu A."/>
            <person name="Hayashi K."/>
            <person name="Sato H."/>
            <person name="Nagai K."/>
            <person name="Kimura K."/>
            <person name="Makita H."/>
            <person name="Sekine M."/>
            <person name="Obayashi M."/>
            <person name="Nishi T."/>
            <person name="Shibahara T."/>
            <person name="Tanaka T."/>
            <person name="Ishii S."/>
            <person name="Yamamoto J."/>
            <person name="Saito K."/>
            <person name="Kawai Y."/>
            <person name="Isono Y."/>
            <person name="Nakamura Y."/>
            <person name="Nagahari K."/>
            <person name="Murakami K."/>
            <person name="Yasuda T."/>
            <person name="Iwayanagi T."/>
            <person name="Wagatsuma M."/>
            <person name="Shiratori A."/>
            <person name="Sudo H."/>
            <person name="Hosoiri T."/>
            <person name="Kaku Y."/>
            <person name="Kodaira H."/>
            <person name="Kondo H."/>
            <person name="Sugawara M."/>
            <person name="Takahashi M."/>
            <person name="Kanda K."/>
            <person name="Yokoi T."/>
            <person name="Furuya T."/>
            <person name="Kikkawa E."/>
            <person name="Omura Y."/>
            <person name="Abe K."/>
            <person name="Kamihara K."/>
            <person name="Katsuta N."/>
            <person name="Sato K."/>
            <person name="Tanikawa M."/>
            <person name="Yamazaki M."/>
            <person name="Ninomiya K."/>
            <person name="Ishibashi T."/>
            <person name="Yamashita H."/>
            <person name="Murakawa K."/>
            <person name="Fujimori K."/>
            <person name="Tanai H."/>
            <person name="Kimata M."/>
            <person name="Watanabe M."/>
            <person name="Hiraoka S."/>
            <person name="Chiba Y."/>
            <person name="Ishida S."/>
            <person name="Ono Y."/>
            <person name="Takiguchi S."/>
            <person name="Watanabe S."/>
            <person name="Yosida M."/>
            <person name="Hotuta T."/>
            <person name="Kusano J."/>
            <person name="Kanehori K."/>
            <person name="Takahashi-Fujii A."/>
            <person name="Hara H."/>
            <person name="Tanase T.-O."/>
            <person name="Nomura Y."/>
            <person name="Togiya S."/>
            <person name="Komai F."/>
            <person name="Hara R."/>
            <person name="Takeuchi K."/>
            <person name="Arita M."/>
            <person name="Imose N."/>
            <person name="Musashino K."/>
            <person name="Yuuki H."/>
            <person name="Oshima A."/>
            <person name="Sasaki N."/>
            <person name="Aotsuka S."/>
            <person name="Yoshikawa Y."/>
            <person name="Matsunawa H."/>
            <person name="Ichihara T."/>
            <person name="Shiohata N."/>
            <person name="Sano S."/>
            <person name="Moriya S."/>
            <person name="Momiyama H."/>
            <person name="Satoh N."/>
            <person name="Takami S."/>
            <person name="Terashima Y."/>
            <person name="Suzuki O."/>
            <person name="Nakagawa S."/>
            <person name="Senoh A."/>
            <person name="Mizoguchi H."/>
            <person name="Goto Y."/>
            <person name="Shimizu F."/>
            <person name="Wakebe H."/>
            <person name="Hishigaki H."/>
            <person name="Watanabe T."/>
            <person name="Sugiyama A."/>
            <person name="Takemoto M."/>
            <person name="Kawakami B."/>
            <person name="Yamazaki M."/>
            <person name="Watanabe K."/>
            <person name="Kumagai A."/>
            <person name="Itakura S."/>
            <person name="Fukuzumi Y."/>
            <person name="Fujimori Y."/>
            <person name="Komiyama M."/>
            <person name="Tashiro H."/>
            <person name="Tanigami A."/>
            <person name="Fujiwara T."/>
            <person name="Ono T."/>
            <person name="Yamada K."/>
            <person name="Fujii Y."/>
            <person name="Ozaki K."/>
            <person name="Hirao M."/>
            <person name="Ohmori Y."/>
            <person name="Kawabata A."/>
            <person name="Hikiji T."/>
            <person name="Kobatake N."/>
            <person name="Inagaki H."/>
            <person name="Ikema Y."/>
            <person name="Okamoto S."/>
            <person name="Okitani R."/>
            <person name="Kawakami T."/>
            <person name="Noguchi S."/>
            <person name="Itoh T."/>
            <person name="Shigeta K."/>
            <person name="Senba T."/>
            <person name="Matsumura K."/>
            <person name="Nakajima Y."/>
            <person name="Mizuno T."/>
            <person name="Morinaga M."/>
            <person name="Sasaki M."/>
            <person name="Togashi T."/>
            <person name="Oyama M."/>
            <person name="Hata H."/>
            <person name="Watanabe M."/>
            <person name="Komatsu T."/>
            <person name="Mizushima-Sugano J."/>
            <person name="Satoh T."/>
            <person name="Shirai Y."/>
            <person name="Takahashi Y."/>
            <person name="Nakagawa K."/>
            <person name="Okumura K."/>
            <person name="Nagase T."/>
            <person name="Nomura N."/>
            <person name="Kikuchi H."/>
            <person name="Masuho Y."/>
            <person name="Yamashita R."/>
            <person name="Nakai K."/>
            <person name="Yada T."/>
            <person name="Nakamura Y."/>
            <person name="Ohara O."/>
            <person name="Isogai T."/>
            <person name="Sugano S."/>
        </authorList>
    </citation>
    <scope>NUCLEOTIDE SEQUENCE [LARGE SCALE MRNA] (ISOFORMS 1 AND 2)</scope>
    <source>
        <tissue>Spleen</tissue>
    </source>
</reference>
<reference key="6">
    <citation type="journal article" date="2006" name="Nature">
        <title>The DNA sequence, annotation and analysis of human chromosome 3.</title>
        <authorList>
            <person name="Muzny D.M."/>
            <person name="Scherer S.E."/>
            <person name="Kaul R."/>
            <person name="Wang J."/>
            <person name="Yu J."/>
            <person name="Sudbrak R."/>
            <person name="Buhay C.J."/>
            <person name="Chen R."/>
            <person name="Cree A."/>
            <person name="Ding Y."/>
            <person name="Dugan-Rocha S."/>
            <person name="Gill R."/>
            <person name="Gunaratne P."/>
            <person name="Harris R.A."/>
            <person name="Hawes A.C."/>
            <person name="Hernandez J."/>
            <person name="Hodgson A.V."/>
            <person name="Hume J."/>
            <person name="Jackson A."/>
            <person name="Khan Z.M."/>
            <person name="Kovar-Smith C."/>
            <person name="Lewis L.R."/>
            <person name="Lozado R.J."/>
            <person name="Metzker M.L."/>
            <person name="Milosavljevic A."/>
            <person name="Miner G.R."/>
            <person name="Morgan M.B."/>
            <person name="Nazareth L.V."/>
            <person name="Scott G."/>
            <person name="Sodergren E."/>
            <person name="Song X.-Z."/>
            <person name="Steffen D."/>
            <person name="Wei S."/>
            <person name="Wheeler D.A."/>
            <person name="Wright M.W."/>
            <person name="Worley K.C."/>
            <person name="Yuan Y."/>
            <person name="Zhang Z."/>
            <person name="Adams C.Q."/>
            <person name="Ansari-Lari M.A."/>
            <person name="Ayele M."/>
            <person name="Brown M.J."/>
            <person name="Chen G."/>
            <person name="Chen Z."/>
            <person name="Clendenning J."/>
            <person name="Clerc-Blankenburg K.P."/>
            <person name="Chen R."/>
            <person name="Chen Z."/>
            <person name="Davis C."/>
            <person name="Delgado O."/>
            <person name="Dinh H.H."/>
            <person name="Dong W."/>
            <person name="Draper H."/>
            <person name="Ernst S."/>
            <person name="Fu G."/>
            <person name="Gonzalez-Garay M.L."/>
            <person name="Garcia D.K."/>
            <person name="Gillett W."/>
            <person name="Gu J."/>
            <person name="Hao B."/>
            <person name="Haugen E."/>
            <person name="Havlak P."/>
            <person name="He X."/>
            <person name="Hennig S."/>
            <person name="Hu S."/>
            <person name="Huang W."/>
            <person name="Jackson L.R."/>
            <person name="Jacob L.S."/>
            <person name="Kelly S.H."/>
            <person name="Kube M."/>
            <person name="Levy R."/>
            <person name="Li Z."/>
            <person name="Liu B."/>
            <person name="Liu J."/>
            <person name="Liu W."/>
            <person name="Lu J."/>
            <person name="Maheshwari M."/>
            <person name="Nguyen B.-V."/>
            <person name="Okwuonu G.O."/>
            <person name="Palmeiri A."/>
            <person name="Pasternak S."/>
            <person name="Perez L.M."/>
            <person name="Phelps K.A."/>
            <person name="Plopper F.J."/>
            <person name="Qiang B."/>
            <person name="Raymond C."/>
            <person name="Rodriguez R."/>
            <person name="Saenphimmachak C."/>
            <person name="Santibanez J."/>
            <person name="Shen H."/>
            <person name="Shen Y."/>
            <person name="Subramanian S."/>
            <person name="Tabor P.E."/>
            <person name="Verduzco D."/>
            <person name="Waldron L."/>
            <person name="Wang J."/>
            <person name="Wang J."/>
            <person name="Wang Q."/>
            <person name="Williams G.A."/>
            <person name="Wong G.K.-S."/>
            <person name="Yao Z."/>
            <person name="Zhang J."/>
            <person name="Zhang X."/>
            <person name="Zhao G."/>
            <person name="Zhou J."/>
            <person name="Zhou Y."/>
            <person name="Nelson D."/>
            <person name="Lehrach H."/>
            <person name="Reinhardt R."/>
            <person name="Naylor S.L."/>
            <person name="Yang H."/>
            <person name="Olson M."/>
            <person name="Weinstock G."/>
            <person name="Gibbs R.A."/>
        </authorList>
    </citation>
    <scope>NUCLEOTIDE SEQUENCE [LARGE SCALE GENOMIC DNA]</scope>
</reference>
<reference key="7">
    <citation type="submission" date="2005-07" db="EMBL/GenBank/DDBJ databases">
        <authorList>
            <person name="Mural R.J."/>
            <person name="Istrail S."/>
            <person name="Sutton G.G."/>
            <person name="Florea L."/>
            <person name="Halpern A.L."/>
            <person name="Mobarry C.M."/>
            <person name="Lippert R."/>
            <person name="Walenz B."/>
            <person name="Shatkay H."/>
            <person name="Dew I."/>
            <person name="Miller J.R."/>
            <person name="Flanigan M.J."/>
            <person name="Edwards N.J."/>
            <person name="Bolanos R."/>
            <person name="Fasulo D."/>
            <person name="Halldorsson B.V."/>
            <person name="Hannenhalli S."/>
            <person name="Turner R."/>
            <person name="Yooseph S."/>
            <person name="Lu F."/>
            <person name="Nusskern D.R."/>
            <person name="Shue B.C."/>
            <person name="Zheng X.H."/>
            <person name="Zhong F."/>
            <person name="Delcher A.L."/>
            <person name="Huson D.H."/>
            <person name="Kravitz S.A."/>
            <person name="Mouchard L."/>
            <person name="Reinert K."/>
            <person name="Remington K.A."/>
            <person name="Clark A.G."/>
            <person name="Waterman M.S."/>
            <person name="Eichler E.E."/>
            <person name="Adams M.D."/>
            <person name="Hunkapiller M.W."/>
            <person name="Myers E.W."/>
            <person name="Venter J.C."/>
        </authorList>
    </citation>
    <scope>NUCLEOTIDE SEQUENCE [LARGE SCALE GENOMIC DNA]</scope>
</reference>
<reference key="8">
    <citation type="journal article" date="2004" name="Genome Res.">
        <title>The status, quality, and expansion of the NIH full-length cDNA project: the Mammalian Gene Collection (MGC).</title>
        <authorList>
            <consortium name="The MGC Project Team"/>
        </authorList>
    </citation>
    <scope>NUCLEOTIDE SEQUENCE [LARGE SCALE MRNA] (ISOFORM 1)</scope>
    <source>
        <tissue>Liver</tissue>
    </source>
</reference>
<reference key="9">
    <citation type="journal article" date="2000" name="J. Biol. Chem.">
        <title>A role of the Ca2+/Mg2+-dependent endonuclease in apoptosis and its inhibition by poly(ADP-ribose) polymerase.</title>
        <authorList>
            <person name="Yakovlev A.G."/>
            <person name="Wang G."/>
            <person name="Stoica B.A."/>
            <person name="Boulares H.A."/>
            <person name="Spoonde A.Y."/>
            <person name="Yoshihara K."/>
            <person name="Smulson M.E."/>
        </authorList>
    </citation>
    <scope>FUNCTION</scope>
    <scope>COFACTOR</scope>
    <scope>ADP-RIBOSYLATION</scope>
</reference>
<reference key="10">
    <citation type="journal article" date="2001" name="Biochemistry">
        <title>Characterization of human DNase I family endonucleases and activation of DNase gamma during apoptosis.</title>
        <authorList>
            <person name="Shiokawa D."/>
            <person name="Tanuma S."/>
        </authorList>
    </citation>
    <scope>FUNCTION</scope>
    <scope>SUBCELLULAR LOCATION</scope>
</reference>
<reference key="11">
    <citation type="journal article" date="2011" name="Nat. Genet.">
        <title>Loss-of-function variant in DNASE1L3 causes a familial form of systemic lupus erythematosus.</title>
        <authorList>
            <person name="Al-Mayouf S.M."/>
            <person name="Sunker A."/>
            <person name="Abdwani R."/>
            <person name="Abrawi S.A."/>
            <person name="Almurshedi F."/>
            <person name="Alhashmi N."/>
            <person name="Al Sonbul A."/>
            <person name="Sewairi W."/>
            <person name="Qari A."/>
            <person name="Abdallah E."/>
            <person name="Al-Owain M."/>
            <person name="Al Motywee S."/>
            <person name="Al-Rayes H."/>
            <person name="Hashem M."/>
            <person name="Khalak H."/>
            <person name="Al-Jebali L."/>
            <person name="Alkuraya F.S."/>
        </authorList>
    </citation>
    <scope>INVOLVEMENT IN SLEB16</scope>
    <scope>VARIANT CYS-206</scope>
</reference>
<reference key="12">
    <citation type="journal article" date="2013" name="J. Biol. Chem.">
        <title>Apoptotic DNA fragmentation may be a cooperative activity between caspase-activated deoxyribonuclease and the poly(ADP-ribose) polymerase-regulated DNAS1L3, an endoplasmic reticulum-localized endonuclease that translocates to the nucleus during apoptosis.</title>
        <authorList>
            <person name="Errami Y."/>
            <person name="Naura A.S."/>
            <person name="Kim H."/>
            <person name="Ju J."/>
            <person name="Suzuki Y."/>
            <person name="El-Bahrawy A.H."/>
            <person name="Ghonim M.A."/>
            <person name="Hemeida R.A."/>
            <person name="Mansy M.S."/>
            <person name="Zhang J."/>
            <person name="Xu M."/>
            <person name="Smulson M.E."/>
            <person name="Brim H."/>
            <person name="Boulares A.H."/>
        </authorList>
    </citation>
    <scope>FUNCTION</scope>
    <scope>SUBCELLULAR LOCATION</scope>
</reference>
<reference key="13">
    <citation type="journal article" date="2013" name="PLoS ONE">
        <title>DNase gamma is the effector endonuclease for internucleosomal DNA fragmentation in necrosis.</title>
        <authorList>
            <person name="Mizuta R."/>
            <person name="Araki S."/>
            <person name="Furukawa M."/>
            <person name="Furukawa Y."/>
            <person name="Ebara S."/>
            <person name="Shiokawa D."/>
            <person name="Hayashi K."/>
            <person name="Tanuma S."/>
            <person name="Kitamura D."/>
        </authorList>
    </citation>
    <scope>FUNCTION</scope>
</reference>
<reference key="14">
    <citation type="journal article" date="2016" name="Cell">
        <title>Digestion of chromatin in apoptotic cell microparticles prevents autoimmunity.</title>
        <authorList>
            <person name="Sisirak V."/>
            <person name="Sally B."/>
            <person name="D'Agati V."/>
            <person name="Martinez-Ortiz W."/>
            <person name="Oezcakar Z.B."/>
            <person name="David J."/>
            <person name="Rashidfarrokhi A."/>
            <person name="Yeste A."/>
            <person name="Panea C."/>
            <person name="Chida A.S."/>
            <person name="Bogunovic M."/>
            <person name="Ivanov I.I."/>
            <person name="Quintana F.J."/>
            <person name="Sanz I."/>
            <person name="Elkon K.B."/>
            <person name="Tekin M."/>
            <person name="Yalcinkaya F."/>
            <person name="Cardozo T.J."/>
            <person name="Clancy R.M."/>
            <person name="Buyon J.P."/>
            <person name="Reizis B."/>
        </authorList>
    </citation>
    <scope>FUNCTION</scope>
    <scope>CHARACTERIZATION OF VARIANT CYS-206</scope>
</reference>
<reference key="15">
    <citation type="journal article" date="2006" name="Science">
        <title>The consensus coding sequences of human breast and colorectal cancers.</title>
        <authorList>
            <person name="Sjoeblom T."/>
            <person name="Jones S."/>
            <person name="Wood L.D."/>
            <person name="Parsons D.W."/>
            <person name="Lin J."/>
            <person name="Barber T.D."/>
            <person name="Mandelker D."/>
            <person name="Leary R.J."/>
            <person name="Ptak J."/>
            <person name="Silliman N."/>
            <person name="Szabo S."/>
            <person name="Buckhaults P."/>
            <person name="Farrell C."/>
            <person name="Meeh P."/>
            <person name="Markowitz S.D."/>
            <person name="Willis J."/>
            <person name="Dawson D."/>
            <person name="Willson J.K.V."/>
            <person name="Gazdar A.F."/>
            <person name="Hartigan J."/>
            <person name="Wu L."/>
            <person name="Liu C."/>
            <person name="Parmigiani G."/>
            <person name="Park B.H."/>
            <person name="Bachman K.E."/>
            <person name="Papadopoulos N."/>
            <person name="Vogelstein B."/>
            <person name="Kinzler K.W."/>
            <person name="Velculescu V.E."/>
        </authorList>
    </citation>
    <scope>VARIANTS [LARGE SCALE ANALYSIS] VAL-19; ARG-82 AND SER-117</scope>
</reference>
<reference key="16">
    <citation type="journal article" date="2009" name="Clin. Chim. Acta">
        <title>Caucasian-specific allele in non-synonymous single nucleotide polymorphisms of the gene encoding deoxyribonuclease I-like 3, potentially relevant to autoimmunity, produces an inactive enzyme.</title>
        <authorList>
            <person name="Ueki M."/>
            <person name="Takeshita H."/>
            <person name="Fujihara J."/>
            <person name="Iida R."/>
            <person name="Yuasa I."/>
            <person name="Kato H."/>
            <person name="Panduro A."/>
            <person name="Nakajima T."/>
            <person name="Kominato Y."/>
            <person name="Yasuda T."/>
        </authorList>
    </citation>
    <scope>VARIANT CYS-206</scope>
    <scope>CHARACTERIZATION OF VARIANT CYS-206</scope>
</reference>
<reference key="17">
    <citation type="journal article" date="2011" name="Electrophoresis">
        <title>Global genetic analysis of all single nucleotide polymorphisms in exons of the human deoxyribonuclease I-like 3 gene and their effect on its catalytic activity.</title>
        <authorList>
            <person name="Ueki M."/>
            <person name="Fujihara J."/>
            <person name="Takeshita H."/>
            <person name="Kimura-Kataoka K."/>
            <person name="Iida R."/>
            <person name="Yuasa I."/>
            <person name="Kato H."/>
            <person name="Yasuda T."/>
        </authorList>
    </citation>
    <scope>VARIANTS ARG-82 AND MET-243</scope>
    <scope>CHARACTERIZATION OF VARIANT ARG-82</scope>
</reference>
<comment type="function">
    <text evidence="2 3 6 8 13 14 15 16 17">Has DNA hydrolytic activity. Is capable of both single- and double-stranded DNA cleavage, producing DNA fragments with 3'-OH ends (By similarity). Can cleave chromatin to nucleosomal units and cleaves nucleosomal and liposome-coated DNA (PubMed:10807908, PubMed:14646506, PubMed:27293190, PubMed:9070308, PubMed:9714828). Acts in internucleosomal DNA fragmentation (INDF) during apoptosis and necrosis (PubMed:23229555, PubMed:24312463). The role in apoptosis includes myogenic and neuronal differentiation, and BCR-mediated clonal deletion of self-reactive B cells (By similarity). Is active on chromatin in apoptotic cell-derived membrane-coated microparticles and thus suppresses anti-DNA autoimmunity (PubMed:27293190). Together with DNASE1, plays a key role in degrading neutrophil extracellular traps (NETs) (By similarity). NETs are mainly composed of DNA fibers and are released by neutrophils to bind pathogens during inflammation (By similarity). Degradation of intravascular NETs by DNASE1 and DNASE1L3 is required to prevent formation of clots that obstruct blood vessels and cause organ damage following inflammation (By similarity).</text>
</comment>
<comment type="cofactor">
    <cofactor evidence="6">
        <name>Ca(2+)</name>
        <dbReference type="ChEBI" id="CHEBI:29108"/>
    </cofactor>
</comment>
<comment type="cofactor">
    <cofactor evidence="6">
        <name>Mg(2+)</name>
        <dbReference type="ChEBI" id="CHEBI:18420"/>
    </cofactor>
</comment>
<comment type="activity regulation">
    <text evidence="3">Inhibited by zinc.</text>
</comment>
<comment type="biophysicochemical properties">
    <phDependence>
        <text>Optimum pH is about 7.2.</text>
    </phDependence>
</comment>
<comment type="interaction">
    <interactant intactId="EBI-9512718">
        <id>Q13609</id>
    </interactant>
    <interactant intactId="EBI-3867333">
        <id>A8MQ03</id>
        <label>CYSRT1</label>
    </interactant>
    <organismsDiffer>false</organismsDiffer>
    <experiments>3</experiments>
</comment>
<comment type="interaction">
    <interactant intactId="EBI-9512718">
        <id>Q13609</id>
    </interactant>
    <interactant intactId="EBI-3958099">
        <id>P26371</id>
        <label>KRTAP5-9</label>
    </interactant>
    <organismsDiffer>false</organismsDiffer>
    <experiments>3</experiments>
</comment>
<comment type="subcellular location">
    <subcellularLocation>
        <location evidence="7 13">Nucleus</location>
    </subcellularLocation>
    <subcellularLocation>
        <location evidence="13">Endoplasmic reticulum</location>
    </subcellularLocation>
    <subcellularLocation>
        <location evidence="17">Secreted</location>
    </subcellularLocation>
    <text evidence="13 19">Translocates from the endoplasmic reticulum to the nucleus during apoptosis (PubMed:23229555). Contradictory reports exist about the subcellular localization under normal physiological conditions. Under conditions of cell death, may diffuse and/or be actively transported to the nucleus.</text>
</comment>
<comment type="alternative products">
    <event type="alternative splicing"/>
    <isoform>
        <id>Q13609-1</id>
        <name>1</name>
        <sequence type="displayed"/>
    </isoform>
    <isoform>
        <id>Q13609-2</id>
        <name>2</name>
        <sequence type="described" ref="VSP_047251"/>
    </isoform>
</comment>
<comment type="tissue specificity">
    <text>Liver and spleen.</text>
</comment>
<comment type="PTM">
    <text evidence="20">Poly-ADP-ribosylated by PARP1. ADP-ribosylation negatively regulates enzymatic activity during apoptosis.</text>
</comment>
<comment type="disease" evidence="12">
    <disease id="DI-03334">
        <name>Systemic lupus erythematosus 16</name>
        <acronym>SLEB16</acronym>
        <description>A rare autosomal recessive form of systemic lupus erythematosus with childhood onset, characterized by high frequency of anti-neutrophil cytoplasmic antibodies and lupus nephritis. Systemic lupus erythematosus is a chronic, relapsing, inflammatory, and often febrile multisystemic disorder of connective tissue, characterized principally by involvement of the skin, joints, kidneys and serosal membranes. The disease is marked by a wide range of system dysfunctions, an elevated erythrocyte sedimentation rate, and the formation of LE cells in the blood or bone marrow.</description>
        <dbReference type="MIM" id="614420"/>
    </disease>
    <text>The disease is caused by variants affecting the gene represented in this entry.</text>
</comment>
<comment type="similarity">
    <text evidence="19">Belongs to the DNase I family.</text>
</comment>
<proteinExistence type="evidence at protein level"/>
<accession>Q13609</accession>
<accession>B2R8B1</accession>
<accession>B7Z707</accession>
<accession>O75803</accession>
<feature type="signal peptide" evidence="1">
    <location>
        <begin position="1"/>
        <end position="20"/>
    </location>
</feature>
<feature type="chain" id="PRO_0000007288" description="Deoxyribonuclease gamma">
    <location>
        <begin position="21"/>
        <end position="305"/>
    </location>
</feature>
<feature type="region of interest" description="Not required for free DNA-nuclease activity but required for activity towards liposome-coated DNA" evidence="2">
    <location>
        <begin position="284"/>
        <end position="305"/>
    </location>
</feature>
<feature type="short sequence motif" description="Bipartite nuclear localization signal" evidence="5">
    <location>
        <begin position="35"/>
        <end position="51"/>
    </location>
</feature>
<feature type="short sequence motif" description="Nuclear localization signal" evidence="5">
    <location>
        <begin position="296"/>
        <end position="304"/>
    </location>
</feature>
<feature type="active site" evidence="4">
    <location>
        <position position="100"/>
    </location>
</feature>
<feature type="active site" evidence="4">
    <location>
        <position position="155"/>
    </location>
</feature>
<feature type="disulfide bond" description="Essential for enzymatic activity" evidence="2">
    <location>
        <begin position="194"/>
        <end position="231"/>
    </location>
</feature>
<feature type="splice variant" id="VSP_047251" description="In isoform 2." evidence="18">
    <location>
        <begin position="78"/>
        <end position="107"/>
    </location>
</feature>
<feature type="sequence variant" id="VAR_036079" description="In a breast cancer sample; somatic mutation; dbSNP:rs763778721." evidence="9">
    <original>L</original>
    <variation>V</variation>
    <location>
        <position position="19"/>
    </location>
</feature>
<feature type="sequence variant" id="VAR_036080" description="In a breast cancer sample; somatic mutation; diminishes enzymatic activity; dbSNP:rs74350392." evidence="9 11">
    <original>G</original>
    <variation>R</variation>
    <location>
        <position position="82"/>
    </location>
</feature>
<feature type="sequence variant" id="VAR_059249" description="In dbSNP:rs12491947." evidence="8">
    <original>N</original>
    <variation>K</variation>
    <location>
        <position position="96"/>
    </location>
</feature>
<feature type="sequence variant" id="VAR_036081" description="In a colorectal cancer sample; somatic mutation." evidence="9">
    <original>Y</original>
    <variation>S</variation>
    <location>
        <position position="117"/>
    </location>
</feature>
<feature type="sequence variant" id="VAR_076797" description="Abolishes enzymatic activity; dbSNP:rs35677470." evidence="10 12 15">
    <original>R</original>
    <variation>C</variation>
    <location>
        <position position="206"/>
    </location>
</feature>
<feature type="sequence variant" id="VAR_061137" description="In dbSNP:rs76440799." evidence="10">
    <original>I</original>
    <variation>M</variation>
    <location>
        <position position="243"/>
    </location>
</feature>
<feature type="strand" evidence="22">
    <location>
        <begin position="21"/>
        <end position="32"/>
    </location>
</feature>
<feature type="helix" evidence="22">
    <location>
        <begin position="33"/>
        <end position="37"/>
    </location>
</feature>
<feature type="helix" evidence="22">
    <location>
        <begin position="39"/>
        <end position="50"/>
    </location>
</feature>
<feature type="strand" evidence="22">
    <location>
        <begin position="53"/>
        <end position="60"/>
    </location>
</feature>
<feature type="helix" evidence="22">
    <location>
        <begin position="67"/>
        <end position="75"/>
    </location>
</feature>
<feature type="helix" evidence="22">
    <location>
        <begin position="79"/>
        <end position="82"/>
    </location>
</feature>
<feature type="strand" evidence="22">
    <location>
        <begin position="85"/>
        <end position="89"/>
    </location>
</feature>
<feature type="strand" evidence="22">
    <location>
        <begin position="93"/>
        <end position="97"/>
    </location>
</feature>
<feature type="strand" evidence="22">
    <location>
        <begin position="100"/>
        <end position="107"/>
    </location>
</feature>
<feature type="turn" evidence="22">
    <location>
        <begin position="108"/>
        <end position="110"/>
    </location>
</feature>
<feature type="strand" evidence="22">
    <location>
        <begin position="112"/>
        <end position="118"/>
    </location>
</feature>
<feature type="strand" evidence="22">
    <location>
        <begin position="126"/>
        <end position="129"/>
    </location>
</feature>
<feature type="strand" evidence="22">
    <location>
        <begin position="135"/>
        <end position="140"/>
    </location>
</feature>
<feature type="strand" evidence="22">
    <location>
        <begin position="144"/>
        <end position="146"/>
    </location>
</feature>
<feature type="strand" evidence="22">
    <location>
        <begin position="148"/>
        <end position="155"/>
    </location>
</feature>
<feature type="helix" evidence="22">
    <location>
        <begin position="158"/>
        <end position="160"/>
    </location>
</feature>
<feature type="helix" evidence="22">
    <location>
        <begin position="161"/>
        <end position="178"/>
    </location>
</feature>
<feature type="strand" evidence="22">
    <location>
        <begin position="184"/>
        <end position="189"/>
    </location>
</feature>
<feature type="turn" evidence="22">
    <location>
        <begin position="194"/>
        <end position="196"/>
    </location>
</feature>
<feature type="helix" evidence="22">
    <location>
        <begin position="199"/>
        <end position="204"/>
    </location>
</feature>
<feature type="helix" evidence="22">
    <location>
        <begin position="206"/>
        <end position="209"/>
    </location>
</feature>
<feature type="strand" evidence="22">
    <location>
        <begin position="213"/>
        <end position="217"/>
    </location>
</feature>
<feature type="strand" evidence="22">
    <location>
        <begin position="224"/>
        <end position="226"/>
    </location>
</feature>
<feature type="strand" evidence="22">
    <location>
        <begin position="234"/>
        <end position="239"/>
    </location>
</feature>
<feature type="helix" evidence="22">
    <location>
        <begin position="241"/>
        <end position="244"/>
    </location>
</feature>
<feature type="helix" evidence="22">
    <location>
        <begin position="257"/>
        <end position="260"/>
    </location>
</feature>
<feature type="helix" evidence="22">
    <location>
        <begin position="265"/>
        <end position="271"/>
    </location>
</feature>
<feature type="strand" evidence="22">
    <location>
        <begin position="277"/>
        <end position="281"/>
    </location>
</feature>
<dbReference type="EC" id="3.1.21.-"/>
<dbReference type="EMBL" id="U56814">
    <property type="protein sequence ID" value="AAB63967.1"/>
    <property type="molecule type" value="mRNA"/>
</dbReference>
<dbReference type="EMBL" id="AF047354">
    <property type="protein sequence ID" value="AAC35752.1"/>
    <property type="molecule type" value="mRNA"/>
</dbReference>
<dbReference type="EMBL" id="U75744">
    <property type="protein sequence ID" value="AAC23652.1"/>
    <property type="molecule type" value="mRNA"/>
</dbReference>
<dbReference type="EMBL" id="AK301263">
    <property type="protein sequence ID" value="BAH13443.1"/>
    <property type="molecule type" value="mRNA"/>
</dbReference>
<dbReference type="EMBL" id="AK313303">
    <property type="protein sequence ID" value="BAG36108.1"/>
    <property type="molecule type" value="mRNA"/>
</dbReference>
<dbReference type="EMBL" id="AC137936">
    <property type="status" value="NOT_ANNOTATED_CDS"/>
    <property type="molecule type" value="Genomic_DNA"/>
</dbReference>
<dbReference type="EMBL" id="CH471055">
    <property type="protein sequence ID" value="EAW65358.1"/>
    <property type="molecule type" value="Genomic_DNA"/>
</dbReference>
<dbReference type="EMBL" id="BC015831">
    <property type="protein sequence ID" value="AAH15831.1"/>
    <property type="molecule type" value="mRNA"/>
</dbReference>
<dbReference type="CCDS" id="CCDS2886.1">
    <molecule id="Q13609-1"/>
</dbReference>
<dbReference type="CCDS" id="CCDS58836.1">
    <molecule id="Q13609-2"/>
</dbReference>
<dbReference type="PIR" id="JC5361">
    <property type="entry name" value="JC5361"/>
</dbReference>
<dbReference type="RefSeq" id="NP_001243489.1">
    <molecule id="Q13609-2"/>
    <property type="nucleotide sequence ID" value="NM_001256560.2"/>
</dbReference>
<dbReference type="RefSeq" id="NP_004935.1">
    <molecule id="Q13609-1"/>
    <property type="nucleotide sequence ID" value="NM_004944.4"/>
</dbReference>
<dbReference type="PDB" id="7KIU">
    <property type="method" value="X-ray"/>
    <property type="resolution" value="2.22 A"/>
    <property type="chains" value="A/B/C/D=21-282"/>
</dbReference>
<dbReference type="PDBsum" id="7KIU"/>
<dbReference type="SMR" id="Q13609"/>
<dbReference type="BioGRID" id="108115">
    <property type="interactions" value="3"/>
</dbReference>
<dbReference type="FunCoup" id="Q13609">
    <property type="interactions" value="924"/>
</dbReference>
<dbReference type="IntAct" id="Q13609">
    <property type="interactions" value="5"/>
</dbReference>
<dbReference type="MINT" id="Q13609"/>
<dbReference type="STRING" id="9606.ENSP00000378053"/>
<dbReference type="BindingDB" id="Q13609"/>
<dbReference type="ChEMBL" id="CHEMBL1649048"/>
<dbReference type="iPTMnet" id="Q13609"/>
<dbReference type="PhosphoSitePlus" id="Q13609"/>
<dbReference type="BioMuta" id="DNASE1L3"/>
<dbReference type="DMDM" id="2494173"/>
<dbReference type="MassIVE" id="Q13609"/>
<dbReference type="PaxDb" id="9606-ENSP00000378053"/>
<dbReference type="PeptideAtlas" id="Q13609"/>
<dbReference type="ProteomicsDB" id="59596">
    <molecule id="Q13609-1"/>
</dbReference>
<dbReference type="Antibodypedia" id="15158">
    <property type="antibodies" value="187 antibodies from 24 providers"/>
</dbReference>
<dbReference type="DNASU" id="1776"/>
<dbReference type="Ensembl" id="ENST00000394549.7">
    <molecule id="Q13609-1"/>
    <property type="protein sequence ID" value="ENSP00000378053.2"/>
    <property type="gene ID" value="ENSG00000163687.14"/>
</dbReference>
<dbReference type="Ensembl" id="ENST00000486455.5">
    <molecule id="Q13609-2"/>
    <property type="protein sequence ID" value="ENSP00000419052.1"/>
    <property type="gene ID" value="ENSG00000163687.14"/>
</dbReference>
<dbReference type="GeneID" id="1776"/>
<dbReference type="KEGG" id="hsa:1776"/>
<dbReference type="MANE-Select" id="ENST00000394549.7">
    <property type="protein sequence ID" value="ENSP00000378053.2"/>
    <property type="RefSeq nucleotide sequence ID" value="NM_004944.4"/>
    <property type="RefSeq protein sequence ID" value="NP_004935.1"/>
</dbReference>
<dbReference type="UCSC" id="uc003djo.3">
    <molecule id="Q13609-1"/>
    <property type="organism name" value="human"/>
</dbReference>
<dbReference type="AGR" id="HGNC:2959"/>
<dbReference type="CTD" id="1776"/>
<dbReference type="DisGeNET" id="1776"/>
<dbReference type="GeneCards" id="DNASE1L3"/>
<dbReference type="HGNC" id="HGNC:2959">
    <property type="gene designation" value="DNASE1L3"/>
</dbReference>
<dbReference type="HPA" id="ENSG00000163687">
    <property type="expression patterns" value="Group enriched (liver, lymphoid tissue)"/>
</dbReference>
<dbReference type="MalaCards" id="DNASE1L3"/>
<dbReference type="MIM" id="602244">
    <property type="type" value="gene"/>
</dbReference>
<dbReference type="MIM" id="614420">
    <property type="type" value="phenotype"/>
</dbReference>
<dbReference type="neXtProt" id="NX_Q13609"/>
<dbReference type="OpenTargets" id="ENSG00000163687"/>
<dbReference type="Orphanet" id="300345">
    <property type="disease" value="Autosomal systemic lupus erythematosus"/>
</dbReference>
<dbReference type="Orphanet" id="36412">
    <property type="disease" value="Hypocomplementemic urticarial vasculitis"/>
</dbReference>
<dbReference type="PharmGKB" id="PA27430"/>
<dbReference type="VEuPathDB" id="HostDB:ENSG00000163687"/>
<dbReference type="eggNOG" id="ENOG502QPNY">
    <property type="taxonomic scope" value="Eukaryota"/>
</dbReference>
<dbReference type="GeneTree" id="ENSGT00950000182846"/>
<dbReference type="HOGENOM" id="CLU_043335_0_1_1"/>
<dbReference type="InParanoid" id="Q13609"/>
<dbReference type="OMA" id="ESIARCD"/>
<dbReference type="OrthoDB" id="10061407at2759"/>
<dbReference type="PAN-GO" id="Q13609">
    <property type="GO annotations" value="5 GO annotations based on evolutionary models"/>
</dbReference>
<dbReference type="PhylomeDB" id="Q13609"/>
<dbReference type="TreeFam" id="TF329541"/>
<dbReference type="PathwayCommons" id="Q13609"/>
<dbReference type="SignaLink" id="Q13609"/>
<dbReference type="BioGRID-ORCS" id="1776">
    <property type="hits" value="13 hits in 1157 CRISPR screens"/>
</dbReference>
<dbReference type="ChiTaRS" id="DNASE1L3">
    <property type="organism name" value="human"/>
</dbReference>
<dbReference type="GeneWiki" id="DNASE1L3"/>
<dbReference type="GenomeRNAi" id="1776"/>
<dbReference type="Pharos" id="Q13609">
    <property type="development level" value="Tbio"/>
</dbReference>
<dbReference type="PRO" id="PR:Q13609"/>
<dbReference type="Proteomes" id="UP000005640">
    <property type="component" value="Chromosome 3"/>
</dbReference>
<dbReference type="RNAct" id="Q13609">
    <property type="molecule type" value="protein"/>
</dbReference>
<dbReference type="Bgee" id="ENSG00000163687">
    <property type="expression patterns" value="Expressed in periodontal ligament and 161 other cell types or tissues"/>
</dbReference>
<dbReference type="ExpressionAtlas" id="Q13609">
    <property type="expression patterns" value="baseline and differential"/>
</dbReference>
<dbReference type="GO" id="GO:0005783">
    <property type="term" value="C:endoplasmic reticulum"/>
    <property type="evidence" value="ECO:0000314"/>
    <property type="project" value="UniProtKB"/>
</dbReference>
<dbReference type="GO" id="GO:0005576">
    <property type="term" value="C:extracellular region"/>
    <property type="evidence" value="ECO:0007669"/>
    <property type="project" value="UniProtKB-SubCell"/>
</dbReference>
<dbReference type="GO" id="GO:0005634">
    <property type="term" value="C:nucleus"/>
    <property type="evidence" value="ECO:0000314"/>
    <property type="project" value="UniProtKB"/>
</dbReference>
<dbReference type="GO" id="GO:0005509">
    <property type="term" value="F:calcium ion binding"/>
    <property type="evidence" value="ECO:0000304"/>
    <property type="project" value="ProtInc"/>
</dbReference>
<dbReference type="GO" id="GO:0004530">
    <property type="term" value="F:deoxyribonuclease I activity"/>
    <property type="evidence" value="ECO:0000318"/>
    <property type="project" value="GO_Central"/>
</dbReference>
<dbReference type="GO" id="GO:0003677">
    <property type="term" value="F:DNA binding"/>
    <property type="evidence" value="ECO:0000318"/>
    <property type="project" value="GO_Central"/>
</dbReference>
<dbReference type="GO" id="GO:0004536">
    <property type="term" value="F:DNA nuclease activity"/>
    <property type="evidence" value="ECO:0000304"/>
    <property type="project" value="ProtInc"/>
</dbReference>
<dbReference type="GO" id="GO:0006309">
    <property type="term" value="P:apoptotic DNA fragmentation"/>
    <property type="evidence" value="ECO:0000314"/>
    <property type="project" value="UniProtKB"/>
</dbReference>
<dbReference type="GO" id="GO:0006259">
    <property type="term" value="P:DNA metabolic process"/>
    <property type="evidence" value="ECO:0000304"/>
    <property type="project" value="ProtInc"/>
</dbReference>
<dbReference type="GO" id="GO:0002283">
    <property type="term" value="P:neutrophil activation involved in immune response"/>
    <property type="evidence" value="ECO:0000250"/>
    <property type="project" value="UniProtKB"/>
</dbReference>
<dbReference type="GO" id="GO:0010623">
    <property type="term" value="P:programmed cell death involved in cell development"/>
    <property type="evidence" value="ECO:0000318"/>
    <property type="project" value="GO_Central"/>
</dbReference>
<dbReference type="GO" id="GO:0002673">
    <property type="term" value="P:regulation of acute inflammatory response"/>
    <property type="evidence" value="ECO:0000250"/>
    <property type="project" value="UniProtKB"/>
</dbReference>
<dbReference type="GO" id="GO:0070948">
    <property type="term" value="P:regulation of neutrophil mediated cytotoxicity"/>
    <property type="evidence" value="ECO:0000250"/>
    <property type="project" value="UniProtKB"/>
</dbReference>
<dbReference type="CDD" id="cd10282">
    <property type="entry name" value="DNase1"/>
    <property type="match status" value="1"/>
</dbReference>
<dbReference type="FunFam" id="3.60.10.10:FF:000007">
    <property type="entry name" value="Deoxyribonuclease"/>
    <property type="match status" value="1"/>
</dbReference>
<dbReference type="Gene3D" id="3.60.10.10">
    <property type="entry name" value="Endonuclease/exonuclease/phosphatase"/>
    <property type="match status" value="1"/>
</dbReference>
<dbReference type="InterPro" id="IPR018057">
    <property type="entry name" value="Deoxyribonuclease-1_AS"/>
</dbReference>
<dbReference type="InterPro" id="IPR016202">
    <property type="entry name" value="DNase_I"/>
</dbReference>
<dbReference type="InterPro" id="IPR033125">
    <property type="entry name" value="DNASE_I_2"/>
</dbReference>
<dbReference type="InterPro" id="IPR036691">
    <property type="entry name" value="Endo/exonu/phosph_ase_sf"/>
</dbReference>
<dbReference type="InterPro" id="IPR005135">
    <property type="entry name" value="Endo/exonuclease/phosphatase"/>
</dbReference>
<dbReference type="PANTHER" id="PTHR11371">
    <property type="entry name" value="DEOXYRIBONUCLEASE"/>
    <property type="match status" value="1"/>
</dbReference>
<dbReference type="PANTHER" id="PTHR11371:SF32">
    <property type="entry name" value="DEOXYRIBONUCLEASE GAMMA"/>
    <property type="match status" value="1"/>
</dbReference>
<dbReference type="Pfam" id="PF03372">
    <property type="entry name" value="Exo_endo_phos"/>
    <property type="match status" value="1"/>
</dbReference>
<dbReference type="PIRSF" id="PIRSF000988">
    <property type="entry name" value="DNase_I_euk"/>
    <property type="match status" value="1"/>
</dbReference>
<dbReference type="PRINTS" id="PR00130">
    <property type="entry name" value="DNASEI"/>
</dbReference>
<dbReference type="SMART" id="SM00476">
    <property type="entry name" value="DNaseIc"/>
    <property type="match status" value="1"/>
</dbReference>
<dbReference type="SUPFAM" id="SSF56219">
    <property type="entry name" value="DNase I-like"/>
    <property type="match status" value="1"/>
</dbReference>
<dbReference type="PROSITE" id="PS00919">
    <property type="entry name" value="DNASE_I_1"/>
    <property type="match status" value="1"/>
</dbReference>
<dbReference type="PROSITE" id="PS00918">
    <property type="entry name" value="DNASE_I_2"/>
    <property type="match status" value="1"/>
</dbReference>
<organism>
    <name type="scientific">Homo sapiens</name>
    <name type="common">Human</name>
    <dbReference type="NCBI Taxonomy" id="9606"/>
    <lineage>
        <taxon>Eukaryota</taxon>
        <taxon>Metazoa</taxon>
        <taxon>Chordata</taxon>
        <taxon>Craniata</taxon>
        <taxon>Vertebrata</taxon>
        <taxon>Euteleostomi</taxon>
        <taxon>Mammalia</taxon>
        <taxon>Eutheria</taxon>
        <taxon>Euarchontoglires</taxon>
        <taxon>Primates</taxon>
        <taxon>Haplorrhini</taxon>
        <taxon>Catarrhini</taxon>
        <taxon>Hominidae</taxon>
        <taxon>Homo</taxon>
    </lineage>
</organism>